<organism>
    <name type="scientific">Burkholderia mallei (strain NCTC 10229)</name>
    <dbReference type="NCBI Taxonomy" id="412022"/>
    <lineage>
        <taxon>Bacteria</taxon>
        <taxon>Pseudomonadati</taxon>
        <taxon>Pseudomonadota</taxon>
        <taxon>Betaproteobacteria</taxon>
        <taxon>Burkholderiales</taxon>
        <taxon>Burkholderiaceae</taxon>
        <taxon>Burkholderia</taxon>
        <taxon>pseudomallei group</taxon>
    </lineage>
</organism>
<dbReference type="EMBL" id="CP000546">
    <property type="protein sequence ID" value="ABN03931.1"/>
    <property type="molecule type" value="Genomic_DNA"/>
</dbReference>
<dbReference type="RefSeq" id="WP_004193246.1">
    <property type="nucleotide sequence ID" value="NC_008836.1"/>
</dbReference>
<dbReference type="SMR" id="A2SB72"/>
<dbReference type="GeneID" id="93060700"/>
<dbReference type="KEGG" id="bml:BMA10229_A3255"/>
<dbReference type="HOGENOM" id="CLU_040318_1_2_4"/>
<dbReference type="Proteomes" id="UP000002283">
    <property type="component" value="Chromosome I"/>
</dbReference>
<dbReference type="GO" id="GO:0022627">
    <property type="term" value="C:cytosolic small ribosomal subunit"/>
    <property type="evidence" value="ECO:0007669"/>
    <property type="project" value="TreeGrafter"/>
</dbReference>
<dbReference type="GO" id="GO:0003735">
    <property type="term" value="F:structural constituent of ribosome"/>
    <property type="evidence" value="ECO:0007669"/>
    <property type="project" value="InterPro"/>
</dbReference>
<dbReference type="GO" id="GO:0006412">
    <property type="term" value="P:translation"/>
    <property type="evidence" value="ECO:0007669"/>
    <property type="project" value="UniProtKB-UniRule"/>
</dbReference>
<dbReference type="CDD" id="cd01425">
    <property type="entry name" value="RPS2"/>
    <property type="match status" value="1"/>
</dbReference>
<dbReference type="FunFam" id="1.10.287.610:FF:000001">
    <property type="entry name" value="30S ribosomal protein S2"/>
    <property type="match status" value="1"/>
</dbReference>
<dbReference type="Gene3D" id="3.40.50.10490">
    <property type="entry name" value="Glucose-6-phosphate isomerase like protein, domain 1"/>
    <property type="match status" value="1"/>
</dbReference>
<dbReference type="Gene3D" id="1.10.287.610">
    <property type="entry name" value="Helix hairpin bin"/>
    <property type="match status" value="1"/>
</dbReference>
<dbReference type="HAMAP" id="MF_00291_B">
    <property type="entry name" value="Ribosomal_uS2_B"/>
    <property type="match status" value="1"/>
</dbReference>
<dbReference type="InterPro" id="IPR001865">
    <property type="entry name" value="Ribosomal_uS2"/>
</dbReference>
<dbReference type="InterPro" id="IPR005706">
    <property type="entry name" value="Ribosomal_uS2_bac/mit/plastid"/>
</dbReference>
<dbReference type="InterPro" id="IPR018130">
    <property type="entry name" value="Ribosomal_uS2_CS"/>
</dbReference>
<dbReference type="InterPro" id="IPR023591">
    <property type="entry name" value="Ribosomal_uS2_flav_dom_sf"/>
</dbReference>
<dbReference type="NCBIfam" id="TIGR01011">
    <property type="entry name" value="rpsB_bact"/>
    <property type="match status" value="1"/>
</dbReference>
<dbReference type="PANTHER" id="PTHR12534">
    <property type="entry name" value="30S RIBOSOMAL PROTEIN S2 PROKARYOTIC AND ORGANELLAR"/>
    <property type="match status" value="1"/>
</dbReference>
<dbReference type="PANTHER" id="PTHR12534:SF0">
    <property type="entry name" value="SMALL RIBOSOMAL SUBUNIT PROTEIN US2M"/>
    <property type="match status" value="1"/>
</dbReference>
<dbReference type="Pfam" id="PF00318">
    <property type="entry name" value="Ribosomal_S2"/>
    <property type="match status" value="1"/>
</dbReference>
<dbReference type="PRINTS" id="PR00395">
    <property type="entry name" value="RIBOSOMALS2"/>
</dbReference>
<dbReference type="SUPFAM" id="SSF52313">
    <property type="entry name" value="Ribosomal protein S2"/>
    <property type="match status" value="1"/>
</dbReference>
<dbReference type="PROSITE" id="PS00962">
    <property type="entry name" value="RIBOSOMAL_S2_1"/>
    <property type="match status" value="1"/>
</dbReference>
<sequence length="246" mass="27137">MAITMRQMLEAGVHFGHQTRFWNPKMAPFIFGHRNKIHIINLEKTLPMYNDALKYVRQLAANRGTILFVGTKRQSRDTIAQEALRAGMPYVNARWLGGMLTNFKTLKVSIKRLKDMEAAVEAGELEKMSKKEALLFEREIAKLQKSIGGVKDMGGIPDAIFVVDVGYHKIAVTEANKLGVPVIAVVDTNHSPEGVDYVIPGNDDSSKAVALYAQGVADAILEGRANAVNEVVQAVRGDDEYVEENA</sequence>
<proteinExistence type="inferred from homology"/>
<name>RS2_BURM9</name>
<reference key="1">
    <citation type="journal article" date="2010" name="Genome Biol. Evol.">
        <title>Continuing evolution of Burkholderia mallei through genome reduction and large-scale rearrangements.</title>
        <authorList>
            <person name="Losada L."/>
            <person name="Ronning C.M."/>
            <person name="DeShazer D."/>
            <person name="Woods D."/>
            <person name="Fedorova N."/>
            <person name="Kim H.S."/>
            <person name="Shabalina S.A."/>
            <person name="Pearson T.R."/>
            <person name="Brinkac L."/>
            <person name="Tan P."/>
            <person name="Nandi T."/>
            <person name="Crabtree J."/>
            <person name="Badger J."/>
            <person name="Beckstrom-Sternberg S."/>
            <person name="Saqib M."/>
            <person name="Schutzer S.E."/>
            <person name="Keim P."/>
            <person name="Nierman W.C."/>
        </authorList>
    </citation>
    <scope>NUCLEOTIDE SEQUENCE [LARGE SCALE GENOMIC DNA]</scope>
    <source>
        <strain>NCTC 10229</strain>
    </source>
</reference>
<keyword id="KW-0687">Ribonucleoprotein</keyword>
<keyword id="KW-0689">Ribosomal protein</keyword>
<evidence type="ECO:0000255" key="1">
    <source>
        <dbReference type="HAMAP-Rule" id="MF_00291"/>
    </source>
</evidence>
<evidence type="ECO:0000305" key="2"/>
<gene>
    <name evidence="1" type="primary">rpsB</name>
    <name type="ordered locus">BMA10229_A3255</name>
</gene>
<comment type="similarity">
    <text evidence="1">Belongs to the universal ribosomal protein uS2 family.</text>
</comment>
<accession>A2SB72</accession>
<feature type="chain" id="PRO_1000003910" description="Small ribosomal subunit protein uS2">
    <location>
        <begin position="1"/>
        <end position="246"/>
    </location>
</feature>
<protein>
    <recommendedName>
        <fullName evidence="1">Small ribosomal subunit protein uS2</fullName>
    </recommendedName>
    <alternativeName>
        <fullName evidence="2">30S ribosomal protein S2</fullName>
    </alternativeName>
</protein>